<reference key="1">
    <citation type="journal article" date="2001" name="Nature">
        <title>Massive gene decay in the leprosy bacillus.</title>
        <authorList>
            <person name="Cole S.T."/>
            <person name="Eiglmeier K."/>
            <person name="Parkhill J."/>
            <person name="James K.D."/>
            <person name="Thomson N.R."/>
            <person name="Wheeler P.R."/>
            <person name="Honore N."/>
            <person name="Garnier T."/>
            <person name="Churcher C.M."/>
            <person name="Harris D.E."/>
            <person name="Mungall K.L."/>
            <person name="Basham D."/>
            <person name="Brown D."/>
            <person name="Chillingworth T."/>
            <person name="Connor R."/>
            <person name="Davies R.M."/>
            <person name="Devlin K."/>
            <person name="Duthoy S."/>
            <person name="Feltwell T."/>
            <person name="Fraser A."/>
            <person name="Hamlin N."/>
            <person name="Holroyd S."/>
            <person name="Hornsby T."/>
            <person name="Jagels K."/>
            <person name="Lacroix C."/>
            <person name="Maclean J."/>
            <person name="Moule S."/>
            <person name="Murphy L.D."/>
            <person name="Oliver K."/>
            <person name="Quail M.A."/>
            <person name="Rajandream M.A."/>
            <person name="Rutherford K.M."/>
            <person name="Rutter S."/>
            <person name="Seeger K."/>
            <person name="Simon S."/>
            <person name="Simmonds M."/>
            <person name="Skelton J."/>
            <person name="Squares R."/>
            <person name="Squares S."/>
            <person name="Stevens K."/>
            <person name="Taylor K."/>
            <person name="Whitehead S."/>
            <person name="Woodward J.R."/>
            <person name="Barrell B.G."/>
        </authorList>
    </citation>
    <scope>NUCLEOTIDE SEQUENCE [LARGE SCALE GENOMIC DNA]</scope>
    <source>
        <strain>TN</strain>
    </source>
</reference>
<proteinExistence type="inferred from homology"/>
<evidence type="ECO:0000255" key="1">
    <source>
        <dbReference type="HAMAP-Rule" id="MF_00163"/>
    </source>
</evidence>
<protein>
    <recommendedName>
        <fullName evidence="1">Peptide deformylase</fullName>
        <shortName evidence="1">PDF</shortName>
        <ecNumber evidence="1">3.5.1.88</ecNumber>
    </recommendedName>
    <alternativeName>
        <fullName evidence="1">Polypeptide deformylase</fullName>
    </alternativeName>
</protein>
<organism>
    <name type="scientific">Mycobacterium leprae (strain TN)</name>
    <dbReference type="NCBI Taxonomy" id="272631"/>
    <lineage>
        <taxon>Bacteria</taxon>
        <taxon>Bacillati</taxon>
        <taxon>Actinomycetota</taxon>
        <taxon>Actinomycetes</taxon>
        <taxon>Mycobacteriales</taxon>
        <taxon>Mycobacteriaceae</taxon>
        <taxon>Mycobacterium</taxon>
    </lineage>
</organism>
<name>DEF_MYCLE</name>
<keyword id="KW-0378">Hydrolase</keyword>
<keyword id="KW-0408">Iron</keyword>
<keyword id="KW-0479">Metal-binding</keyword>
<keyword id="KW-0648">Protein biosynthesis</keyword>
<keyword id="KW-1185">Reference proteome</keyword>
<dbReference type="EC" id="3.5.1.88" evidence="1"/>
<dbReference type="EMBL" id="AL583923">
    <property type="protein sequence ID" value="CAC30884.1"/>
    <property type="molecule type" value="Genomic_DNA"/>
</dbReference>
<dbReference type="PIR" id="D87150">
    <property type="entry name" value="D87150"/>
</dbReference>
<dbReference type="RefSeq" id="NP_302302.1">
    <property type="nucleotide sequence ID" value="NC_002677.1"/>
</dbReference>
<dbReference type="RefSeq" id="WP_010908623.1">
    <property type="nucleotide sequence ID" value="NC_002677.1"/>
</dbReference>
<dbReference type="SMR" id="Q9CBI2"/>
<dbReference type="STRING" id="272631.gene:17575781"/>
<dbReference type="KEGG" id="mle:ML1929"/>
<dbReference type="PATRIC" id="fig|272631.5.peg.3651"/>
<dbReference type="Leproma" id="ML1929"/>
<dbReference type="eggNOG" id="COG0242">
    <property type="taxonomic scope" value="Bacteria"/>
</dbReference>
<dbReference type="HOGENOM" id="CLU_061901_1_0_11"/>
<dbReference type="OrthoDB" id="9804313at2"/>
<dbReference type="Proteomes" id="UP000000806">
    <property type="component" value="Chromosome"/>
</dbReference>
<dbReference type="GO" id="GO:0046872">
    <property type="term" value="F:metal ion binding"/>
    <property type="evidence" value="ECO:0007669"/>
    <property type="project" value="UniProtKB-KW"/>
</dbReference>
<dbReference type="GO" id="GO:0042586">
    <property type="term" value="F:peptide deformylase activity"/>
    <property type="evidence" value="ECO:0007669"/>
    <property type="project" value="UniProtKB-UniRule"/>
</dbReference>
<dbReference type="GO" id="GO:0043686">
    <property type="term" value="P:co-translational protein modification"/>
    <property type="evidence" value="ECO:0007669"/>
    <property type="project" value="TreeGrafter"/>
</dbReference>
<dbReference type="GO" id="GO:0006412">
    <property type="term" value="P:translation"/>
    <property type="evidence" value="ECO:0007669"/>
    <property type="project" value="UniProtKB-UniRule"/>
</dbReference>
<dbReference type="CDD" id="cd00487">
    <property type="entry name" value="Pep_deformylase"/>
    <property type="match status" value="1"/>
</dbReference>
<dbReference type="Gene3D" id="3.90.45.10">
    <property type="entry name" value="Peptide deformylase"/>
    <property type="match status" value="1"/>
</dbReference>
<dbReference type="HAMAP" id="MF_00163">
    <property type="entry name" value="Pep_deformylase"/>
    <property type="match status" value="1"/>
</dbReference>
<dbReference type="InterPro" id="IPR023635">
    <property type="entry name" value="Peptide_deformylase"/>
</dbReference>
<dbReference type="InterPro" id="IPR036821">
    <property type="entry name" value="Peptide_deformylase_sf"/>
</dbReference>
<dbReference type="NCBIfam" id="TIGR00079">
    <property type="entry name" value="pept_deformyl"/>
    <property type="match status" value="1"/>
</dbReference>
<dbReference type="NCBIfam" id="NF001159">
    <property type="entry name" value="PRK00150.1-3"/>
    <property type="match status" value="1"/>
</dbReference>
<dbReference type="NCBIfam" id="NF009483">
    <property type="entry name" value="PRK12846.1-4"/>
    <property type="match status" value="1"/>
</dbReference>
<dbReference type="PANTHER" id="PTHR10458">
    <property type="entry name" value="PEPTIDE DEFORMYLASE"/>
    <property type="match status" value="1"/>
</dbReference>
<dbReference type="PANTHER" id="PTHR10458:SF2">
    <property type="entry name" value="PEPTIDE DEFORMYLASE, MITOCHONDRIAL"/>
    <property type="match status" value="1"/>
</dbReference>
<dbReference type="Pfam" id="PF01327">
    <property type="entry name" value="Pep_deformylase"/>
    <property type="match status" value="1"/>
</dbReference>
<dbReference type="PIRSF" id="PIRSF004749">
    <property type="entry name" value="Pep_def"/>
    <property type="match status" value="1"/>
</dbReference>
<dbReference type="PRINTS" id="PR01576">
    <property type="entry name" value="PDEFORMYLASE"/>
</dbReference>
<dbReference type="SUPFAM" id="SSF56420">
    <property type="entry name" value="Peptide deformylase"/>
    <property type="match status" value="1"/>
</dbReference>
<feature type="chain" id="PRO_0000082805" description="Peptide deformylase">
    <location>
        <begin position="1"/>
        <end position="197"/>
    </location>
</feature>
<feature type="active site" evidence="1">
    <location>
        <position position="149"/>
    </location>
</feature>
<feature type="binding site" evidence="1">
    <location>
        <position position="106"/>
    </location>
    <ligand>
        <name>Fe cation</name>
        <dbReference type="ChEBI" id="CHEBI:24875"/>
    </ligand>
</feature>
<feature type="binding site" evidence="1">
    <location>
        <position position="148"/>
    </location>
    <ligand>
        <name>Fe cation</name>
        <dbReference type="ChEBI" id="CHEBI:24875"/>
    </ligand>
</feature>
<feature type="binding site" evidence="1">
    <location>
        <position position="152"/>
    </location>
    <ligand>
        <name>Fe cation</name>
        <dbReference type="ChEBI" id="CHEBI:24875"/>
    </ligand>
</feature>
<accession>Q9CBI2</accession>
<sequence>MAIAPIRIVGDPVLHTPTAPVQVAADGSLPANLNGLISTMYDTMDAAHGVGLAANQIGYGLRVFVYDCAEDCRQTARRRGVVINPILETSEIPETMPDPDTDNEGCLSVPGESFPIGRAQWARVTGLDADGNPVTTEGTGLFARMLQHETGHLDGFLYLDYLIGRHARSAKRAIKSRHWGVPGLSWMPGEVPDPFGP</sequence>
<gene>
    <name evidence="1" type="primary">def</name>
    <name type="ordered locus">ML1929</name>
</gene>
<comment type="function">
    <text evidence="1">Removes the formyl group from the N-terminal Met of newly synthesized proteins. Requires at least a dipeptide for an efficient rate of reaction. N-terminal L-methionine is a prerequisite for activity but the enzyme has broad specificity at other positions.</text>
</comment>
<comment type="catalytic activity">
    <reaction evidence="1">
        <text>N-terminal N-formyl-L-methionyl-[peptide] + H2O = N-terminal L-methionyl-[peptide] + formate</text>
        <dbReference type="Rhea" id="RHEA:24420"/>
        <dbReference type="Rhea" id="RHEA-COMP:10639"/>
        <dbReference type="Rhea" id="RHEA-COMP:10640"/>
        <dbReference type="ChEBI" id="CHEBI:15377"/>
        <dbReference type="ChEBI" id="CHEBI:15740"/>
        <dbReference type="ChEBI" id="CHEBI:49298"/>
        <dbReference type="ChEBI" id="CHEBI:64731"/>
        <dbReference type="EC" id="3.5.1.88"/>
    </reaction>
</comment>
<comment type="cofactor">
    <cofactor evidence="1">
        <name>Fe(2+)</name>
        <dbReference type="ChEBI" id="CHEBI:29033"/>
    </cofactor>
    <text evidence="1">Binds 1 Fe(2+) ion.</text>
</comment>
<comment type="similarity">
    <text evidence="1">Belongs to the polypeptide deformylase family.</text>
</comment>